<gene>
    <name type="primary">CHS5</name>
    <name type="synonym">CAL3</name>
    <name type="ordered locus">YLR330W</name>
    <name type="ORF">L8543.18</name>
</gene>
<name>CHS5_YEAST</name>
<organism>
    <name type="scientific">Saccharomyces cerevisiae (strain ATCC 204508 / S288c)</name>
    <name type="common">Baker's yeast</name>
    <dbReference type="NCBI Taxonomy" id="559292"/>
    <lineage>
        <taxon>Eukaryota</taxon>
        <taxon>Fungi</taxon>
        <taxon>Dikarya</taxon>
        <taxon>Ascomycota</taxon>
        <taxon>Saccharomycotina</taxon>
        <taxon>Saccharomycetes</taxon>
        <taxon>Saccharomycetales</taxon>
        <taxon>Saccharomycetaceae</taxon>
        <taxon>Saccharomyces</taxon>
    </lineage>
</organism>
<proteinExistence type="evidence at protein level"/>
<feature type="chain" id="PRO_0000089661" description="Chitin biosynthesis protein CHS5">
    <location>
        <begin position="1"/>
        <end position="671"/>
    </location>
</feature>
<feature type="domain" description="Fibronectin type-III" evidence="2">
    <location>
        <begin position="78"/>
        <end position="168"/>
    </location>
</feature>
<feature type="domain" description="BRCT" evidence="1">
    <location>
        <begin position="166"/>
        <end position="262"/>
    </location>
</feature>
<feature type="region of interest" description="Disordered" evidence="3">
    <location>
        <begin position="280"/>
        <end position="671"/>
    </location>
</feature>
<feature type="compositionally biased region" description="Polar residues" evidence="3">
    <location>
        <begin position="311"/>
        <end position="321"/>
    </location>
</feature>
<feature type="compositionally biased region" description="Basic and acidic residues" evidence="3">
    <location>
        <begin position="322"/>
        <end position="332"/>
    </location>
</feature>
<feature type="compositionally biased region" description="Polar residues" evidence="3">
    <location>
        <begin position="349"/>
        <end position="365"/>
    </location>
</feature>
<feature type="compositionally biased region" description="Basic and acidic residues" evidence="3">
    <location>
        <begin position="409"/>
        <end position="419"/>
    </location>
</feature>
<feature type="compositionally biased region" description="Polar residues" evidence="3">
    <location>
        <begin position="434"/>
        <end position="443"/>
    </location>
</feature>
<feature type="compositionally biased region" description="Acidic residues" evidence="3">
    <location>
        <begin position="461"/>
        <end position="486"/>
    </location>
</feature>
<feature type="compositionally biased region" description="Basic and acidic residues" evidence="3">
    <location>
        <begin position="487"/>
        <end position="521"/>
    </location>
</feature>
<feature type="compositionally biased region" description="Acidic residues" evidence="3">
    <location>
        <begin position="522"/>
        <end position="538"/>
    </location>
</feature>
<feature type="compositionally biased region" description="Polar residues" evidence="3">
    <location>
        <begin position="542"/>
        <end position="551"/>
    </location>
</feature>
<feature type="compositionally biased region" description="Basic and acidic residues" evidence="3">
    <location>
        <begin position="581"/>
        <end position="591"/>
    </location>
</feature>
<feature type="compositionally biased region" description="Polar residues" evidence="3">
    <location>
        <begin position="606"/>
        <end position="620"/>
    </location>
</feature>
<feature type="compositionally biased region" description="Acidic residues" evidence="3">
    <location>
        <begin position="627"/>
        <end position="638"/>
    </location>
</feature>
<feature type="compositionally biased region" description="Basic residues" evidence="3">
    <location>
        <begin position="657"/>
        <end position="671"/>
    </location>
</feature>
<feature type="modified residue" description="Phosphothreonine" evidence="19">
    <location>
        <position position="305"/>
    </location>
</feature>
<feature type="modified residue" description="Phosphoserine" evidence="18 19">
    <location>
        <position position="338"/>
    </location>
</feature>
<feature type="modified residue" description="Phosphoserine" evidence="18">
    <location>
        <position position="362"/>
    </location>
</feature>
<feature type="modified residue" description="Phosphoserine" evidence="19">
    <location>
        <position position="365"/>
    </location>
</feature>
<feature type="modified residue" description="Phosphoserine" evidence="19">
    <location>
        <position position="383"/>
    </location>
</feature>
<feature type="modified residue" description="Phosphoserine" evidence="19">
    <location>
        <position position="384"/>
    </location>
</feature>
<feature type="modified residue" description="Phosphoserine" evidence="18">
    <location>
        <position position="573"/>
    </location>
</feature>
<feature type="modified residue" description="Phosphoserine" evidence="19">
    <location>
        <position position="579"/>
    </location>
</feature>
<feature type="modified residue" description="Phosphoserine" evidence="17 18 19">
    <location>
        <position position="590"/>
    </location>
</feature>
<feature type="cross-link" description="Glycyl lysine isopeptide (Lys-Gly) (interchain with G-Cter in ubiquitin)" evidence="20">
    <location>
        <position position="584"/>
    </location>
</feature>
<feature type="strand" evidence="21">
    <location>
        <begin position="4"/>
        <end position="13"/>
    </location>
</feature>
<feature type="strand" evidence="22">
    <location>
        <begin position="19"/>
        <end position="21"/>
    </location>
</feature>
<feature type="strand" evidence="21">
    <location>
        <begin position="27"/>
        <end position="31"/>
    </location>
</feature>
<feature type="turn" evidence="22">
    <location>
        <begin position="32"/>
        <end position="34"/>
    </location>
</feature>
<feature type="strand" evidence="21">
    <location>
        <begin position="44"/>
        <end position="53"/>
    </location>
</feature>
<feature type="helix" evidence="22">
    <location>
        <begin position="57"/>
        <end position="74"/>
    </location>
</feature>
<feature type="strand" evidence="23">
    <location>
        <begin position="84"/>
        <end position="89"/>
    </location>
</feature>
<feature type="strand" evidence="23">
    <location>
        <begin position="94"/>
        <end position="98"/>
    </location>
</feature>
<feature type="strand" evidence="23">
    <location>
        <begin position="108"/>
        <end position="117"/>
    </location>
</feature>
<feature type="turn" evidence="23">
    <location>
        <begin position="126"/>
        <end position="128"/>
    </location>
</feature>
<feature type="strand" evidence="23">
    <location>
        <begin position="131"/>
        <end position="134"/>
    </location>
</feature>
<feature type="strand" evidence="23">
    <location>
        <begin position="142"/>
        <end position="151"/>
    </location>
</feature>
<feature type="strand" evidence="23">
    <location>
        <begin position="154"/>
        <end position="164"/>
    </location>
</feature>
<feature type="strand" evidence="23">
    <location>
        <begin position="176"/>
        <end position="178"/>
    </location>
</feature>
<feature type="helix" evidence="23">
    <location>
        <begin position="183"/>
        <end position="185"/>
    </location>
</feature>
<feature type="helix" evidence="23">
    <location>
        <begin position="189"/>
        <end position="198"/>
    </location>
</feature>
<feature type="strand" evidence="23">
    <location>
        <begin position="205"/>
        <end position="207"/>
    </location>
</feature>
<feature type="strand" evidence="23">
    <location>
        <begin position="214"/>
        <end position="216"/>
    </location>
</feature>
<feature type="helix" evidence="23">
    <location>
        <begin position="227"/>
        <end position="234"/>
    </location>
</feature>
<feature type="helix" evidence="23">
    <location>
        <begin position="243"/>
        <end position="250"/>
    </location>
</feature>
<feature type="helix" evidence="23">
    <location>
        <begin position="258"/>
        <end position="260"/>
    </location>
</feature>
<feature type="helix" evidence="23">
    <location>
        <begin position="266"/>
        <end position="272"/>
    </location>
</feature>
<feature type="helix" evidence="23">
    <location>
        <begin position="279"/>
        <end position="284"/>
    </location>
</feature>
<comment type="function">
    <text evidence="4 7 8 9 10 11 13 15">Component of the CHS5/6 complex which mediates export of specific cargo proteins, including chitin synthase CHS3. Also involved in targeting FUS1 to sites of polarized growth.</text>
</comment>
<comment type="subunit">
    <text evidence="8 10 11">Component of the CHS5/6 complex composed of the 4 CHAPS proteins BCH1, BCH2, BUD7, and CHS6 as well as at least CHS5 and GTP-bound ARF1. The complex interacts with the cargo protein CHS3.</text>
</comment>
<comment type="interaction">
    <interactant intactId="EBI-4640">
        <id>Q12114</id>
    </interactant>
    <interactant intactId="EBI-2816">
        <id>P11076</id>
        <label>ARF1</label>
    </interactant>
    <organismsDiffer>false</organismsDiffer>
    <experiments>5</experiments>
</comment>
<comment type="interaction">
    <interactant intactId="EBI-4640">
        <id>Q12114</id>
    </interactant>
    <interactant intactId="EBI-27508">
        <id>Q05029</id>
        <label>BCH1</label>
    </interactant>
    <organismsDiffer>false</organismsDiffer>
    <experiments>18</experiments>
</comment>
<comment type="interaction">
    <interactant intactId="EBI-4640">
        <id>Q12114</id>
    </interactant>
    <interactant intactId="EBI-26374">
        <id>P36122</id>
        <label>BCH2</label>
    </interactant>
    <organismsDiffer>false</organismsDiffer>
    <experiments>8</experiments>
</comment>
<comment type="interaction">
    <interactant intactId="EBI-4640">
        <id>Q12114</id>
    </interactant>
    <interactant intactId="EBI-32770">
        <id>Q08754</id>
        <label>BUD7</label>
    </interactant>
    <organismsDiffer>false</organismsDiffer>
    <experiments>11</experiments>
</comment>
<comment type="interaction">
    <interactant intactId="EBI-4640">
        <id>Q12114</id>
    </interactant>
    <interactant intactId="EBI-4649">
        <id>P40955</id>
        <label>CHS6</label>
    </interactant>
    <organismsDiffer>false</organismsDiffer>
    <experiments>18</experiments>
</comment>
<comment type="subcellular location">
    <subcellularLocation>
        <location evidence="5 8 11 14">Golgi apparatus</location>
        <location evidence="5 8 11 14">trans-Golgi network membrane</location>
        <topology evidence="5 8 11 14">Peripheral membrane protein</topology>
    </subcellularLocation>
    <text>Trans-Golgi network location requires interaction with myristoylated GTP-bound ARF1 for the recruitment to the membranes.</text>
</comment>
<comment type="disruption phenotype">
    <text evidence="12">Abolishes CHS3 localization to the bud neck and plasma membrane, with increased protein localization to intracellular vesicles.</text>
</comment>
<comment type="miscellaneous">
    <text evidence="6">Present with 172 molecules/cell in log phase SD medium.</text>
</comment>
<comment type="similarity">
    <text evidence="16">Belongs to the CHS5 family.</text>
</comment>
<evidence type="ECO:0000255" key="1">
    <source>
        <dbReference type="PROSITE-ProRule" id="PRU00033"/>
    </source>
</evidence>
<evidence type="ECO:0000255" key="2">
    <source>
        <dbReference type="PROSITE-ProRule" id="PRU00316"/>
    </source>
</evidence>
<evidence type="ECO:0000256" key="3">
    <source>
        <dbReference type="SAM" id="MobiDB-lite"/>
    </source>
</evidence>
<evidence type="ECO:0000269" key="4">
    <source>
    </source>
</evidence>
<evidence type="ECO:0000269" key="5">
    <source>
    </source>
</evidence>
<evidence type="ECO:0000269" key="6">
    <source>
    </source>
</evidence>
<evidence type="ECO:0000269" key="7">
    <source>
    </source>
</evidence>
<evidence type="ECO:0000269" key="8">
    <source>
    </source>
</evidence>
<evidence type="ECO:0000269" key="9">
    <source>
    </source>
</evidence>
<evidence type="ECO:0000269" key="10">
    <source>
    </source>
</evidence>
<evidence type="ECO:0000269" key="11">
    <source>
    </source>
</evidence>
<evidence type="ECO:0000269" key="12">
    <source>
    </source>
</evidence>
<evidence type="ECO:0000269" key="13">
    <source>
    </source>
</evidence>
<evidence type="ECO:0000269" key="14">
    <source>
    </source>
</evidence>
<evidence type="ECO:0000269" key="15">
    <source>
    </source>
</evidence>
<evidence type="ECO:0000305" key="16"/>
<evidence type="ECO:0007744" key="17">
    <source>
    </source>
</evidence>
<evidence type="ECO:0007744" key="18">
    <source>
    </source>
</evidence>
<evidence type="ECO:0007744" key="19">
    <source>
    </source>
</evidence>
<evidence type="ECO:0007744" key="20">
    <source>
    </source>
</evidence>
<evidence type="ECO:0007829" key="21">
    <source>
        <dbReference type="PDB" id="4IN3"/>
    </source>
</evidence>
<evidence type="ECO:0007829" key="22">
    <source>
        <dbReference type="PDB" id="4WJW"/>
    </source>
</evidence>
<evidence type="ECO:0007829" key="23">
    <source>
        <dbReference type="PDB" id="4YG8"/>
    </source>
</evidence>
<keyword id="KW-0002">3D-structure</keyword>
<keyword id="KW-0333">Golgi apparatus</keyword>
<keyword id="KW-1017">Isopeptide bond</keyword>
<keyword id="KW-0472">Membrane</keyword>
<keyword id="KW-0597">Phosphoprotein</keyword>
<keyword id="KW-0653">Protein transport</keyword>
<keyword id="KW-1185">Reference proteome</keyword>
<keyword id="KW-0813">Transport</keyword>
<keyword id="KW-0832">Ubl conjugation</keyword>
<dbReference type="EMBL" id="Z49198">
    <property type="protein sequence ID" value="CAA89059.1"/>
    <property type="molecule type" value="Genomic_DNA"/>
</dbReference>
<dbReference type="EMBL" id="U20618">
    <property type="protein sequence ID" value="AAB64526.1"/>
    <property type="molecule type" value="Genomic_DNA"/>
</dbReference>
<dbReference type="EMBL" id="BK006945">
    <property type="protein sequence ID" value="DAA09638.1"/>
    <property type="molecule type" value="Genomic_DNA"/>
</dbReference>
<dbReference type="PIR" id="S53407">
    <property type="entry name" value="S53407"/>
</dbReference>
<dbReference type="RefSeq" id="NP_013434.1">
    <property type="nucleotide sequence ID" value="NM_001182219.1"/>
</dbReference>
<dbReference type="PDB" id="4IN3">
    <property type="method" value="X-ray"/>
    <property type="resolution" value="2.94 A"/>
    <property type="chains" value="A/C=1-77"/>
</dbReference>
<dbReference type="PDB" id="4WJW">
    <property type="method" value="X-ray"/>
    <property type="resolution" value="2.59 A"/>
    <property type="chains" value="A=1-77"/>
</dbReference>
<dbReference type="PDB" id="4YG8">
    <property type="method" value="X-ray"/>
    <property type="resolution" value="2.75 A"/>
    <property type="chains" value="A=50-299"/>
</dbReference>
<dbReference type="PDBsum" id="4IN3"/>
<dbReference type="PDBsum" id="4WJW"/>
<dbReference type="PDBsum" id="4YG8"/>
<dbReference type="SMR" id="Q12114"/>
<dbReference type="BioGRID" id="31594">
    <property type="interactions" value="490"/>
</dbReference>
<dbReference type="ComplexPortal" id="CPX-1719">
    <property type="entry name" value="Exomer complex"/>
</dbReference>
<dbReference type="DIP" id="DIP-8073N"/>
<dbReference type="FunCoup" id="Q12114">
    <property type="interactions" value="129"/>
</dbReference>
<dbReference type="IntAct" id="Q12114">
    <property type="interactions" value="66"/>
</dbReference>
<dbReference type="MINT" id="Q12114"/>
<dbReference type="STRING" id="4932.YLR330W"/>
<dbReference type="iPTMnet" id="Q12114"/>
<dbReference type="PaxDb" id="4932-YLR330W"/>
<dbReference type="PeptideAtlas" id="Q12114"/>
<dbReference type="EnsemblFungi" id="YLR330W_mRNA">
    <property type="protein sequence ID" value="YLR330W"/>
    <property type="gene ID" value="YLR330W"/>
</dbReference>
<dbReference type="GeneID" id="851041"/>
<dbReference type="KEGG" id="sce:YLR330W"/>
<dbReference type="AGR" id="SGD:S000004322"/>
<dbReference type="SGD" id="S000004322">
    <property type="gene designation" value="CHS5"/>
</dbReference>
<dbReference type="VEuPathDB" id="FungiDB:YLR330W"/>
<dbReference type="eggNOG" id="KOG1181">
    <property type="taxonomic scope" value="Eukaryota"/>
</dbReference>
<dbReference type="HOGENOM" id="CLU_019904_3_0_1"/>
<dbReference type="InParanoid" id="Q12114"/>
<dbReference type="OMA" id="TPYEFQL"/>
<dbReference type="OrthoDB" id="245697at2759"/>
<dbReference type="BioCyc" id="YEAST:YLR330W-MONOMER"/>
<dbReference type="BioGRID-ORCS" id="851041">
    <property type="hits" value="0 hits in 10 CRISPR screens"/>
</dbReference>
<dbReference type="EvolutionaryTrace" id="Q12114"/>
<dbReference type="PRO" id="PR:Q12114"/>
<dbReference type="Proteomes" id="UP000002311">
    <property type="component" value="Chromosome XII"/>
</dbReference>
<dbReference type="RNAct" id="Q12114">
    <property type="molecule type" value="protein"/>
</dbReference>
<dbReference type="GO" id="GO:0005737">
    <property type="term" value="C:cytoplasm"/>
    <property type="evidence" value="ECO:0000314"/>
    <property type="project" value="SGD"/>
</dbReference>
<dbReference type="GO" id="GO:0005829">
    <property type="term" value="C:cytosol"/>
    <property type="evidence" value="ECO:0007005"/>
    <property type="project" value="SGD"/>
</dbReference>
<dbReference type="GO" id="GO:0034044">
    <property type="term" value="C:exomer complex"/>
    <property type="evidence" value="ECO:0000314"/>
    <property type="project" value="SGD"/>
</dbReference>
<dbReference type="GO" id="GO:0043332">
    <property type="term" value="C:mating projection tip"/>
    <property type="evidence" value="ECO:0007005"/>
    <property type="project" value="SGD"/>
</dbReference>
<dbReference type="GO" id="GO:0016020">
    <property type="term" value="C:membrane"/>
    <property type="evidence" value="ECO:0007669"/>
    <property type="project" value="UniProtKB-KW"/>
</dbReference>
<dbReference type="GO" id="GO:0005802">
    <property type="term" value="C:trans-Golgi network"/>
    <property type="evidence" value="ECO:0000318"/>
    <property type="project" value="GO_Central"/>
</dbReference>
<dbReference type="GO" id="GO:0046983">
    <property type="term" value="F:protein dimerization activity"/>
    <property type="evidence" value="ECO:0007669"/>
    <property type="project" value="InterPro"/>
</dbReference>
<dbReference type="GO" id="GO:0031267">
    <property type="term" value="F:small GTPase binding"/>
    <property type="evidence" value="ECO:0000353"/>
    <property type="project" value="SGD"/>
</dbReference>
<dbReference type="GO" id="GO:0030476">
    <property type="term" value="P:ascospore wall assembly"/>
    <property type="evidence" value="ECO:0000315"/>
    <property type="project" value="SGD"/>
</dbReference>
<dbReference type="GO" id="GO:0000282">
    <property type="term" value="P:cellular bud site selection"/>
    <property type="evidence" value="ECO:0000315"/>
    <property type="project" value="SGD"/>
</dbReference>
<dbReference type="GO" id="GO:0006032">
    <property type="term" value="P:chitin catabolic process"/>
    <property type="evidence" value="ECO:0000315"/>
    <property type="project" value="SGD"/>
</dbReference>
<dbReference type="GO" id="GO:0000747">
    <property type="term" value="P:conjugation with cellular fusion"/>
    <property type="evidence" value="ECO:0000315"/>
    <property type="project" value="SGD"/>
</dbReference>
<dbReference type="GO" id="GO:0006893">
    <property type="term" value="P:Golgi to plasma membrane transport"/>
    <property type="evidence" value="ECO:0000315"/>
    <property type="project" value="SGD"/>
</dbReference>
<dbReference type="GO" id="GO:0015031">
    <property type="term" value="P:protein transport"/>
    <property type="evidence" value="ECO:0000303"/>
    <property type="project" value="ComplexPortal"/>
</dbReference>
<dbReference type="GO" id="GO:0006355">
    <property type="term" value="P:regulation of DNA-templated transcription"/>
    <property type="evidence" value="ECO:0000314"/>
    <property type="project" value="SGD"/>
</dbReference>
<dbReference type="CDD" id="cd17742">
    <property type="entry name" value="BRCT_CHS5_like"/>
    <property type="match status" value="1"/>
</dbReference>
<dbReference type="CDD" id="cd13945">
    <property type="entry name" value="Chs5_N"/>
    <property type="match status" value="1"/>
</dbReference>
<dbReference type="CDD" id="cd00063">
    <property type="entry name" value="FN3"/>
    <property type="match status" value="1"/>
</dbReference>
<dbReference type="FunFam" id="2.60.40.10:FF:000453">
    <property type="entry name" value="Chitin biosynthesis protein CHS5"/>
    <property type="match status" value="1"/>
</dbReference>
<dbReference type="FunFam" id="3.40.50.10190:FF:000077">
    <property type="entry name" value="Chitin biosynthesis protein CHS5"/>
    <property type="match status" value="1"/>
</dbReference>
<dbReference type="Gene3D" id="6.20.120.50">
    <property type="match status" value="1"/>
</dbReference>
<dbReference type="Gene3D" id="3.40.50.10190">
    <property type="entry name" value="BRCT domain"/>
    <property type="match status" value="1"/>
</dbReference>
<dbReference type="Gene3D" id="2.60.40.10">
    <property type="entry name" value="Immunoglobulins"/>
    <property type="match status" value="1"/>
</dbReference>
<dbReference type="InterPro" id="IPR001357">
    <property type="entry name" value="BRCT_dom"/>
</dbReference>
<dbReference type="InterPro" id="IPR036420">
    <property type="entry name" value="BRCT_dom_sf"/>
</dbReference>
<dbReference type="InterPro" id="IPR031673">
    <property type="entry name" value="Chs5_N"/>
</dbReference>
<dbReference type="InterPro" id="IPR052827">
    <property type="entry name" value="CHS_Export/Cell_Fusion_Reg"/>
</dbReference>
<dbReference type="InterPro" id="IPR031669">
    <property type="entry name" value="Fn3_2"/>
</dbReference>
<dbReference type="InterPro" id="IPR003961">
    <property type="entry name" value="FN3_dom"/>
</dbReference>
<dbReference type="InterPro" id="IPR036116">
    <property type="entry name" value="FN3_sf"/>
</dbReference>
<dbReference type="InterPro" id="IPR013783">
    <property type="entry name" value="Ig-like_fold"/>
</dbReference>
<dbReference type="PANTHER" id="PTHR47351">
    <property type="entry name" value="CHITIN BIOSYNTHESIS PROTEIN CHS5"/>
    <property type="match status" value="1"/>
</dbReference>
<dbReference type="PANTHER" id="PTHR47351:SF1">
    <property type="entry name" value="CHITIN BIOSYNTHESIS PROTEIN CHS5"/>
    <property type="match status" value="1"/>
</dbReference>
<dbReference type="Pfam" id="PF00533">
    <property type="entry name" value="BRCT"/>
    <property type="match status" value="1"/>
</dbReference>
<dbReference type="Pfam" id="PF16892">
    <property type="entry name" value="CHS5_N"/>
    <property type="match status" value="1"/>
</dbReference>
<dbReference type="Pfam" id="PF16893">
    <property type="entry name" value="fn3_2"/>
    <property type="match status" value="1"/>
</dbReference>
<dbReference type="SMART" id="SM00292">
    <property type="entry name" value="BRCT"/>
    <property type="match status" value="1"/>
</dbReference>
<dbReference type="SMART" id="SM00060">
    <property type="entry name" value="FN3"/>
    <property type="match status" value="1"/>
</dbReference>
<dbReference type="SUPFAM" id="SSF52113">
    <property type="entry name" value="BRCT domain"/>
    <property type="match status" value="1"/>
</dbReference>
<dbReference type="SUPFAM" id="SSF49265">
    <property type="entry name" value="Fibronectin type III"/>
    <property type="match status" value="1"/>
</dbReference>
<dbReference type="PROSITE" id="PS50172">
    <property type="entry name" value="BRCT"/>
    <property type="match status" value="1"/>
</dbReference>
<dbReference type="PROSITE" id="PS50853">
    <property type="entry name" value="FN3"/>
    <property type="match status" value="1"/>
</dbReference>
<accession>Q12114</accession>
<accession>D6VYX2</accession>
<reference key="1">
    <citation type="journal article" date="1997" name="Mol. Cell. Biol.">
        <title>CHS5, a gene involved in chitin synthesis and mating in Saccharomyces cerevisiae.</title>
        <authorList>
            <person name="Santos B."/>
            <person name="Duran A."/>
            <person name="Valdivieso M.H."/>
        </authorList>
    </citation>
    <scope>NUCLEOTIDE SEQUENCE [GENOMIC DNA]</scope>
    <scope>FUNCTION</scope>
    <source>
        <strain>S288c / GRF88</strain>
    </source>
</reference>
<reference key="2">
    <citation type="journal article" date="1997" name="Nature">
        <title>The nucleotide sequence of Saccharomyces cerevisiae chromosome XII.</title>
        <authorList>
            <person name="Johnston M."/>
            <person name="Hillier L.W."/>
            <person name="Riles L."/>
            <person name="Albermann K."/>
            <person name="Andre B."/>
            <person name="Ansorge W."/>
            <person name="Benes V."/>
            <person name="Brueckner M."/>
            <person name="Delius H."/>
            <person name="Dubois E."/>
            <person name="Duesterhoeft A."/>
            <person name="Entian K.-D."/>
            <person name="Floeth M."/>
            <person name="Goffeau A."/>
            <person name="Hebling U."/>
            <person name="Heumann K."/>
            <person name="Heuss-Neitzel D."/>
            <person name="Hilbert H."/>
            <person name="Hilger F."/>
            <person name="Kleine K."/>
            <person name="Koetter P."/>
            <person name="Louis E.J."/>
            <person name="Messenguy F."/>
            <person name="Mewes H.-W."/>
            <person name="Miosga T."/>
            <person name="Moestl D."/>
            <person name="Mueller-Auer S."/>
            <person name="Nentwich U."/>
            <person name="Obermaier B."/>
            <person name="Piravandi E."/>
            <person name="Pohl T.M."/>
            <person name="Portetelle D."/>
            <person name="Purnelle B."/>
            <person name="Rechmann S."/>
            <person name="Rieger M."/>
            <person name="Rinke M."/>
            <person name="Rose M."/>
            <person name="Scharfe M."/>
            <person name="Scherens B."/>
            <person name="Scholler P."/>
            <person name="Schwager C."/>
            <person name="Schwarz S."/>
            <person name="Underwood A.P."/>
            <person name="Urrestarazu L.A."/>
            <person name="Vandenbol M."/>
            <person name="Verhasselt P."/>
            <person name="Vierendeels F."/>
            <person name="Voet M."/>
            <person name="Volckaert G."/>
            <person name="Voss H."/>
            <person name="Wambutt R."/>
            <person name="Wedler E."/>
            <person name="Wedler H."/>
            <person name="Zimmermann F.K."/>
            <person name="Zollner A."/>
            <person name="Hani J."/>
            <person name="Hoheisel J.D."/>
        </authorList>
    </citation>
    <scope>NUCLEOTIDE SEQUENCE [LARGE SCALE GENOMIC DNA]</scope>
    <source>
        <strain>ATCC 204508 / S288c</strain>
    </source>
</reference>
<reference key="3">
    <citation type="journal article" date="2014" name="G3 (Bethesda)">
        <title>The reference genome sequence of Saccharomyces cerevisiae: Then and now.</title>
        <authorList>
            <person name="Engel S.R."/>
            <person name="Dietrich F.S."/>
            <person name="Fisk D.G."/>
            <person name="Binkley G."/>
            <person name="Balakrishnan R."/>
            <person name="Costanzo M.C."/>
            <person name="Dwight S.S."/>
            <person name="Hitz B.C."/>
            <person name="Karra K."/>
            <person name="Nash R.S."/>
            <person name="Weng S."/>
            <person name="Wong E.D."/>
            <person name="Lloyd P."/>
            <person name="Skrzypek M.S."/>
            <person name="Miyasato S.R."/>
            <person name="Simison M."/>
            <person name="Cherry J.M."/>
        </authorList>
    </citation>
    <scope>GENOME REANNOTATION</scope>
    <source>
        <strain>ATCC 204508 / S288c</strain>
    </source>
</reference>
<reference key="4">
    <citation type="journal article" date="1994" name="Proc. Natl. Acad. Sci. U.S.A.">
        <title>Chitin synthase 3 from yeast has zymogenic properties that depend on both the CAL1 and the CAL3 genes.</title>
        <authorList>
            <person name="Choi W.-J."/>
            <person name="Sburlati A."/>
            <person name="Cabib E."/>
        </authorList>
    </citation>
    <scope>FUNCTION</scope>
</reference>
<reference key="5">
    <citation type="journal article" date="1996" name="Curr. Biol.">
        <title>Fibronectin type III domains in yeast detected by a hidden Markov model.</title>
        <authorList>
            <person name="Bateman A."/>
            <person name="Chothia C."/>
        </authorList>
    </citation>
    <scope>DOMAIN FIBRONECTIN TYPE-III</scope>
</reference>
<reference key="6">
    <citation type="journal article" date="1997" name="J. Cell Biol.">
        <title>Targeting of chitin synthase 3 to polarized growth sites in yeast requires Chs5p and Myo2p.</title>
        <authorList>
            <person name="Santos B."/>
            <person name="Snyder M."/>
        </authorList>
    </citation>
    <scope>SUBCELLULAR LOCATION</scope>
</reference>
<reference key="7">
    <citation type="journal article" date="2003" name="Eukaryot. Cell">
        <title>Specific protein targeting during cell differentiation: polarized localization of Fus1p during mating depends on Chs5p in Saccharomyces cerevisiae.</title>
        <authorList>
            <person name="Santos B."/>
            <person name="Snyder M."/>
        </authorList>
    </citation>
    <scope>FUNCTION</scope>
</reference>
<reference key="8">
    <citation type="journal article" date="2003" name="Nature">
        <title>Global analysis of protein localization in budding yeast.</title>
        <authorList>
            <person name="Huh W.-K."/>
            <person name="Falvo J.V."/>
            <person name="Gerke L.C."/>
            <person name="Carroll A.S."/>
            <person name="Howson R.W."/>
            <person name="Weissman J.S."/>
            <person name="O'Shea E.K."/>
        </authorList>
    </citation>
    <scope>SUBCELLULAR LOCATION [LARGE SCALE ANALYSIS]</scope>
</reference>
<reference key="9">
    <citation type="journal article" date="2003" name="Nature">
        <title>Global analysis of protein expression in yeast.</title>
        <authorList>
            <person name="Ghaemmaghami S."/>
            <person name="Huh W.-K."/>
            <person name="Bower K."/>
            <person name="Howson R.W."/>
            <person name="Belle A."/>
            <person name="Dephoure N."/>
            <person name="O'Shea E.K."/>
            <person name="Weissman J.S."/>
        </authorList>
    </citation>
    <scope>LEVEL OF PROTEIN EXPRESSION [LARGE SCALE ANALYSIS]</scope>
</reference>
<reference key="10">
    <citation type="journal article" date="2005" name="BMC Genet.">
        <title>An interactional network of genes involved in chitin synthesis in Saccharomyces cerevisiae.</title>
        <authorList>
            <person name="Lesage G."/>
            <person name="Shapiro J."/>
            <person name="Specht C.A."/>
            <person name="Sdicu A.-M."/>
            <person name="Menard P."/>
            <person name="Hussein S."/>
            <person name="Tong A.H.Y."/>
            <person name="Boone C."/>
            <person name="Bussey H."/>
        </authorList>
    </citation>
    <scope>FUNCTION</scope>
</reference>
<reference key="11">
    <citation type="journal article" date="2006" name="EMBO J.">
        <title>Arf1p, Chs5p and the ChAPs are required for export of specialized cargo from the Golgi.</title>
        <authorList>
            <person name="Trautwein M."/>
            <person name="Schindler C."/>
            <person name="Gauss R."/>
            <person name="Dengjel J."/>
            <person name="Hartmann E."/>
            <person name="Spang A."/>
        </authorList>
    </citation>
    <scope>FUNCTION</scope>
    <scope>SUBCELLULAR LOCATION</scope>
    <scope>INTERACTION WITH ARF1; BCH1; BCH2; BUD7; CHS3 AND CHS6</scope>
    <scope>DOMAIN</scope>
</reference>
<reference key="12">
    <citation type="journal article" date="2006" name="J. Cell Biol.">
        <title>Palmitoylation by the DHHC protein Pfa4 regulates the ER exit of Chs3.</title>
        <authorList>
            <person name="Lam K.K.Y."/>
            <person name="Davey M."/>
            <person name="Sun B."/>
            <person name="Roth A.F."/>
            <person name="Davis N.G."/>
            <person name="Conibear E."/>
        </authorList>
    </citation>
    <scope>FUNCTION</scope>
</reference>
<reference key="13">
    <citation type="journal article" date="2006" name="J. Cell Biol.">
        <title>Exomer: a coat complex for transport of select membrane proteins from the trans-Golgi network to the plasma membrane in yeast.</title>
        <authorList>
            <person name="Wang C.-W."/>
            <person name="Hamamoto S."/>
            <person name="Orci L."/>
            <person name="Schekman R."/>
        </authorList>
    </citation>
    <scope>FUNCTION</scope>
    <scope>IDENTIFICATION IN THE CHS5/6 COMPLEX</scope>
    <scope>INTERACTION WITH ARF1</scope>
    <scope>SUBCELLULAR LOCATION</scope>
</reference>
<reference key="14">
    <citation type="journal article" date="2006" name="Mol. Biol. Cell">
        <title>Chs5/6 complex: a multiprotein complex that interacts with and conveys chitin synthase III from the trans-Golgi network to the cell surface.</title>
        <authorList>
            <person name="Sanchatjate S."/>
            <person name="Schekman R."/>
        </authorList>
    </citation>
    <scope>FUNCTION</scope>
    <scope>IDENTIFICATION IN THE CHS5/6 COMPLEX</scope>
    <scope>INTERACTION WITH CHS3</scope>
</reference>
<reference key="15">
    <citation type="journal article" date="2007" name="J. Proteome Res.">
        <title>Large-scale phosphorylation analysis of alpha-factor-arrested Saccharomyces cerevisiae.</title>
        <authorList>
            <person name="Li X."/>
            <person name="Gerber S.A."/>
            <person name="Rudner A.D."/>
            <person name="Beausoleil S.A."/>
            <person name="Haas W."/>
            <person name="Villen J."/>
            <person name="Elias J.E."/>
            <person name="Gygi S.P."/>
        </authorList>
    </citation>
    <scope>PHOSPHORYLATION [LARGE SCALE ANALYSIS] AT SER-590</scope>
    <scope>IDENTIFICATION BY MASS SPECTROMETRY [LARGE SCALE ANALYSIS]</scope>
    <source>
        <strain>ADR376</strain>
    </source>
</reference>
<reference key="16">
    <citation type="journal article" date="2008" name="Mol. Cell. Proteomics">
        <title>A multidimensional chromatography technology for in-depth phosphoproteome analysis.</title>
        <authorList>
            <person name="Albuquerque C.P."/>
            <person name="Smolka M.B."/>
            <person name="Payne S.H."/>
            <person name="Bafna V."/>
            <person name="Eng J."/>
            <person name="Zhou H."/>
        </authorList>
    </citation>
    <scope>PHOSPHORYLATION [LARGE SCALE ANALYSIS] AT SER-338; SER-362; SER-573 AND SER-590</scope>
    <scope>IDENTIFICATION BY MASS SPECTROMETRY [LARGE SCALE ANALYSIS]</scope>
</reference>
<reference key="17">
    <citation type="journal article" date="2009" name="Science">
        <title>Global analysis of Cdk1 substrate phosphorylation sites provides insights into evolution.</title>
        <authorList>
            <person name="Holt L.J."/>
            <person name="Tuch B.B."/>
            <person name="Villen J."/>
            <person name="Johnson A.D."/>
            <person name="Gygi S.P."/>
            <person name="Morgan D.O."/>
        </authorList>
    </citation>
    <scope>PHOSPHORYLATION [LARGE SCALE ANALYSIS] AT THR-305; SER-338; SER-365; SER-383; SER-384; SER-579 AND SER-590</scope>
    <scope>IDENTIFICATION BY MASS SPECTROMETRY [LARGE SCALE ANALYSIS]</scope>
</reference>
<reference key="18">
    <citation type="journal article" date="2012" name="Proteomics">
        <title>Sites of ubiquitin attachment in Saccharomyces cerevisiae.</title>
        <authorList>
            <person name="Starita L.M."/>
            <person name="Lo R.S."/>
            <person name="Eng J.K."/>
            <person name="von Haller P.D."/>
            <person name="Fields S."/>
        </authorList>
    </citation>
    <scope>UBIQUITINATION [LARGE SCALE ANALYSIS] AT LYS-584</scope>
    <scope>IDENTIFICATION BY MASS SPECTROMETRY [LARGE SCALE ANALYSIS]</scope>
</reference>
<reference key="19">
    <citation type="journal article" date="2017" name="Int. J. Mol. Sci.">
        <title>In Vitro and In Vivo Studies on the Structural Organization of Chs3 from Saccharomyces cerevisiae.</title>
        <authorList>
            <person name="Gohlke S."/>
            <person name="Muthukrishnan S."/>
            <person name="Merzendorfer H."/>
        </authorList>
    </citation>
    <scope>DISRUPTION PHENOTYPE</scope>
</reference>
<sequence>MSSVDVLLTVGKLDASLALLTTQDHHVIEFPTVLLPENVKAGSIIKMQVSQNLEEEKKQRNHFKSIQAKILEKYGTHKPESPVLKIVNVTQTSCVLAWDPLKLGSAKLKSLILYRKGIRSMVIPNPFKVTTTKISGLSVDTPYEFQLKLITTSGTLWSEKVILRTHKMTDMSGITVCLGPLDPLKEISDLQISQCLSHIGARPLQRHVAIDTTHFVCNDLDNEESNEELIRAKHNNIPIVRPEWVRACEVEKRIVGVRGFYLDADQSILKNYTFPPVNEEELSYSKENEPVAEVADENKMPEDTTDVEQVASPNDNESNPSEAKEQGEKSGHETAPVSPVEDPLHASTALENETTIETVNPSVRSLKSEPVGTPNIEENKADSSAEAVVEEPNEAVAESSPNEEATGQKSEDTDTHSNEQADNGFVQTEEVAENNITTESAGENNEPADDAAMEFGRPEAEIETPEVNESIEDANEPAEDSNEPVEDSNKPVKDSNKPVEDSNKPVEDSNKPVEDSNKPVEDANEPVEDTSEPVEDAGEPVQETNEFTTDIASPRHQEEDIELEAEPKDATESVAVEPSNEDVKPEEKGSEAEDDINNVSKEAASGESTTHQKTEASASLESSAVTEEQETTEAEVNTDDVLSTKEAKKNTGNSNSNKKKNKKNKKKGKKK</sequence>
<protein>
    <recommendedName>
        <fullName>Chitin biosynthesis protein CHS5</fullName>
    </recommendedName>
    <alternativeName>
        <fullName>Protein CAL3</fullName>
    </alternativeName>
</protein>